<reference key="1">
    <citation type="submission" date="2007-05" db="EMBL/GenBank/DDBJ databases">
        <title>Complete sequence of chromosome of Acidiphilium cryptum JF-5.</title>
        <authorList>
            <consortium name="US DOE Joint Genome Institute"/>
            <person name="Copeland A."/>
            <person name="Lucas S."/>
            <person name="Lapidus A."/>
            <person name="Barry K."/>
            <person name="Detter J.C."/>
            <person name="Glavina del Rio T."/>
            <person name="Hammon N."/>
            <person name="Israni S."/>
            <person name="Dalin E."/>
            <person name="Tice H."/>
            <person name="Pitluck S."/>
            <person name="Sims D."/>
            <person name="Brettin T."/>
            <person name="Bruce D."/>
            <person name="Han C."/>
            <person name="Schmutz J."/>
            <person name="Larimer F."/>
            <person name="Land M."/>
            <person name="Hauser L."/>
            <person name="Kyrpides N."/>
            <person name="Kim E."/>
            <person name="Magnuson T."/>
            <person name="Richardson P."/>
        </authorList>
    </citation>
    <scope>NUCLEOTIDE SEQUENCE [LARGE SCALE GENOMIC DNA]</scope>
    <source>
        <strain>JF-5</strain>
    </source>
</reference>
<protein>
    <recommendedName>
        <fullName evidence="1">Small ribosomal subunit protein uS2</fullName>
    </recommendedName>
    <alternativeName>
        <fullName evidence="2">30S ribosomal protein S2</fullName>
    </alternativeName>
</protein>
<proteinExistence type="inferred from homology"/>
<organism>
    <name type="scientific">Acidiphilium cryptum (strain JF-5)</name>
    <dbReference type="NCBI Taxonomy" id="349163"/>
    <lineage>
        <taxon>Bacteria</taxon>
        <taxon>Pseudomonadati</taxon>
        <taxon>Pseudomonadota</taxon>
        <taxon>Alphaproteobacteria</taxon>
        <taxon>Acetobacterales</taxon>
        <taxon>Acidocellaceae</taxon>
        <taxon>Acidiphilium</taxon>
    </lineage>
</organism>
<name>RS2_ACICJ</name>
<evidence type="ECO:0000255" key="1">
    <source>
        <dbReference type="HAMAP-Rule" id="MF_00291"/>
    </source>
</evidence>
<evidence type="ECO:0000305" key="2"/>
<feature type="chain" id="PRO_1000003878" description="Small ribosomal subunit protein uS2">
    <location>
        <begin position="1"/>
        <end position="256"/>
    </location>
</feature>
<comment type="similarity">
    <text evidence="1">Belongs to the universal ribosomal protein uS2 family.</text>
</comment>
<dbReference type="EMBL" id="CP000697">
    <property type="protein sequence ID" value="ABQ30899.1"/>
    <property type="molecule type" value="Genomic_DNA"/>
</dbReference>
<dbReference type="RefSeq" id="WP_011942424.1">
    <property type="nucleotide sequence ID" value="NC_009484.1"/>
</dbReference>
<dbReference type="SMR" id="A5FZ67"/>
<dbReference type="STRING" id="349163.Acry_1694"/>
<dbReference type="KEGG" id="acr:Acry_1694"/>
<dbReference type="eggNOG" id="COG0052">
    <property type="taxonomic scope" value="Bacteria"/>
</dbReference>
<dbReference type="HOGENOM" id="CLU_040318_2_1_5"/>
<dbReference type="Proteomes" id="UP000000245">
    <property type="component" value="Chromosome"/>
</dbReference>
<dbReference type="GO" id="GO:0022627">
    <property type="term" value="C:cytosolic small ribosomal subunit"/>
    <property type="evidence" value="ECO:0007669"/>
    <property type="project" value="TreeGrafter"/>
</dbReference>
<dbReference type="GO" id="GO:0003735">
    <property type="term" value="F:structural constituent of ribosome"/>
    <property type="evidence" value="ECO:0007669"/>
    <property type="project" value="InterPro"/>
</dbReference>
<dbReference type="GO" id="GO:0006412">
    <property type="term" value="P:translation"/>
    <property type="evidence" value="ECO:0007669"/>
    <property type="project" value="UniProtKB-UniRule"/>
</dbReference>
<dbReference type="CDD" id="cd01425">
    <property type="entry name" value="RPS2"/>
    <property type="match status" value="1"/>
</dbReference>
<dbReference type="Gene3D" id="3.40.50.10490">
    <property type="entry name" value="Glucose-6-phosphate isomerase like protein, domain 1"/>
    <property type="match status" value="1"/>
</dbReference>
<dbReference type="Gene3D" id="1.10.287.610">
    <property type="entry name" value="Helix hairpin bin"/>
    <property type="match status" value="1"/>
</dbReference>
<dbReference type="HAMAP" id="MF_00291_B">
    <property type="entry name" value="Ribosomal_uS2_B"/>
    <property type="match status" value="1"/>
</dbReference>
<dbReference type="InterPro" id="IPR001865">
    <property type="entry name" value="Ribosomal_uS2"/>
</dbReference>
<dbReference type="InterPro" id="IPR005706">
    <property type="entry name" value="Ribosomal_uS2_bac/mit/plastid"/>
</dbReference>
<dbReference type="InterPro" id="IPR018130">
    <property type="entry name" value="Ribosomal_uS2_CS"/>
</dbReference>
<dbReference type="InterPro" id="IPR023591">
    <property type="entry name" value="Ribosomal_uS2_flav_dom_sf"/>
</dbReference>
<dbReference type="NCBIfam" id="TIGR01011">
    <property type="entry name" value="rpsB_bact"/>
    <property type="match status" value="1"/>
</dbReference>
<dbReference type="PANTHER" id="PTHR12534">
    <property type="entry name" value="30S RIBOSOMAL PROTEIN S2 PROKARYOTIC AND ORGANELLAR"/>
    <property type="match status" value="1"/>
</dbReference>
<dbReference type="PANTHER" id="PTHR12534:SF0">
    <property type="entry name" value="SMALL RIBOSOMAL SUBUNIT PROTEIN US2M"/>
    <property type="match status" value="1"/>
</dbReference>
<dbReference type="Pfam" id="PF00318">
    <property type="entry name" value="Ribosomal_S2"/>
    <property type="match status" value="1"/>
</dbReference>
<dbReference type="PRINTS" id="PR00395">
    <property type="entry name" value="RIBOSOMALS2"/>
</dbReference>
<dbReference type="SUPFAM" id="SSF52313">
    <property type="entry name" value="Ribosomal protein S2"/>
    <property type="match status" value="1"/>
</dbReference>
<dbReference type="PROSITE" id="PS00962">
    <property type="entry name" value="RIBOSOMAL_S2_1"/>
    <property type="match status" value="1"/>
</dbReference>
<dbReference type="PROSITE" id="PS00963">
    <property type="entry name" value="RIBOSOMAL_S2_2"/>
    <property type="match status" value="1"/>
</dbReference>
<accession>A5FZ67</accession>
<gene>
    <name evidence="1" type="primary">rpsB</name>
    <name type="ordered locus">Acry_1694</name>
</gene>
<sequence>MAMPDVSLRQLLEAGVHFGHNTRRWNPRMAPFLFGVRNQVHIIDLQQTVPMLERALREIRNVTAGGGRVLFVGTKRAAAEHVAYAAKRCGQYYVNHRWLGGMLTNWKTITNSIRKLRQMEETLAGDGQGLTKKEMLNLMRERDKLDRALGGIKEMGGLPDILFIIDTNKEKLAVEEANKLGIPVVAVLDSNSNPEGVTYPIPGNDDAIRAITLYCDLVANAVLDGISAEMAASGADIGALEELPAEAVDEDAEAHA</sequence>
<keyword id="KW-1185">Reference proteome</keyword>
<keyword id="KW-0687">Ribonucleoprotein</keyword>
<keyword id="KW-0689">Ribosomal protein</keyword>